<gene>
    <name evidence="1" type="primary">trmD</name>
    <name type="ordered locus">LEUM_1478</name>
</gene>
<dbReference type="EC" id="2.1.1.228" evidence="1"/>
<dbReference type="EMBL" id="CP000414">
    <property type="protein sequence ID" value="ABJ62570.1"/>
    <property type="molecule type" value="Genomic_DNA"/>
</dbReference>
<dbReference type="RefSeq" id="WP_011680157.1">
    <property type="nucleotide sequence ID" value="NC_008531.1"/>
</dbReference>
<dbReference type="SMR" id="Q03W52"/>
<dbReference type="EnsemblBacteria" id="ABJ62570">
    <property type="protein sequence ID" value="ABJ62570"/>
    <property type="gene ID" value="LEUM_1478"/>
</dbReference>
<dbReference type="GeneID" id="29577475"/>
<dbReference type="KEGG" id="lme:LEUM_1478"/>
<dbReference type="eggNOG" id="COG0336">
    <property type="taxonomic scope" value="Bacteria"/>
</dbReference>
<dbReference type="HOGENOM" id="CLU_047363_0_1_9"/>
<dbReference type="Proteomes" id="UP000000362">
    <property type="component" value="Chromosome"/>
</dbReference>
<dbReference type="GO" id="GO:0005829">
    <property type="term" value="C:cytosol"/>
    <property type="evidence" value="ECO:0007669"/>
    <property type="project" value="TreeGrafter"/>
</dbReference>
<dbReference type="GO" id="GO:0052906">
    <property type="term" value="F:tRNA (guanine(37)-N1)-methyltransferase activity"/>
    <property type="evidence" value="ECO:0007669"/>
    <property type="project" value="UniProtKB-UniRule"/>
</dbReference>
<dbReference type="GO" id="GO:0002939">
    <property type="term" value="P:tRNA N1-guanine methylation"/>
    <property type="evidence" value="ECO:0007669"/>
    <property type="project" value="TreeGrafter"/>
</dbReference>
<dbReference type="CDD" id="cd18080">
    <property type="entry name" value="TrmD-like"/>
    <property type="match status" value="1"/>
</dbReference>
<dbReference type="FunFam" id="1.10.1270.20:FF:000001">
    <property type="entry name" value="tRNA (guanine-N(1)-)-methyltransferase"/>
    <property type="match status" value="1"/>
</dbReference>
<dbReference type="FunFam" id="3.40.1280.10:FF:000001">
    <property type="entry name" value="tRNA (guanine-N(1)-)-methyltransferase"/>
    <property type="match status" value="1"/>
</dbReference>
<dbReference type="Gene3D" id="3.40.1280.10">
    <property type="match status" value="1"/>
</dbReference>
<dbReference type="Gene3D" id="1.10.1270.20">
    <property type="entry name" value="tRNA(m1g37)methyltransferase, domain 2"/>
    <property type="match status" value="1"/>
</dbReference>
<dbReference type="HAMAP" id="MF_00605">
    <property type="entry name" value="TrmD"/>
    <property type="match status" value="1"/>
</dbReference>
<dbReference type="InterPro" id="IPR029028">
    <property type="entry name" value="Alpha/beta_knot_MTases"/>
</dbReference>
<dbReference type="InterPro" id="IPR023148">
    <property type="entry name" value="tRNA_m1G_MeTrfase_C_sf"/>
</dbReference>
<dbReference type="InterPro" id="IPR002649">
    <property type="entry name" value="tRNA_m1G_MeTrfase_TrmD"/>
</dbReference>
<dbReference type="InterPro" id="IPR029026">
    <property type="entry name" value="tRNA_m1G_MTases_N"/>
</dbReference>
<dbReference type="InterPro" id="IPR016009">
    <property type="entry name" value="tRNA_MeTrfase_TRMD/TRM10"/>
</dbReference>
<dbReference type="NCBIfam" id="NF000648">
    <property type="entry name" value="PRK00026.1"/>
    <property type="match status" value="1"/>
</dbReference>
<dbReference type="NCBIfam" id="TIGR00088">
    <property type="entry name" value="trmD"/>
    <property type="match status" value="1"/>
</dbReference>
<dbReference type="PANTHER" id="PTHR46417">
    <property type="entry name" value="TRNA (GUANINE-N(1)-)-METHYLTRANSFERASE"/>
    <property type="match status" value="1"/>
</dbReference>
<dbReference type="PANTHER" id="PTHR46417:SF1">
    <property type="entry name" value="TRNA (GUANINE-N(1)-)-METHYLTRANSFERASE"/>
    <property type="match status" value="1"/>
</dbReference>
<dbReference type="Pfam" id="PF01746">
    <property type="entry name" value="tRNA_m1G_MT"/>
    <property type="match status" value="1"/>
</dbReference>
<dbReference type="PIRSF" id="PIRSF000386">
    <property type="entry name" value="tRNA_mtase"/>
    <property type="match status" value="1"/>
</dbReference>
<dbReference type="SUPFAM" id="SSF75217">
    <property type="entry name" value="alpha/beta knot"/>
    <property type="match status" value="1"/>
</dbReference>
<accession>Q03W52</accession>
<feature type="chain" id="PRO_1000006493" description="tRNA (guanine-N(1)-)-methyltransferase">
    <location>
        <begin position="1"/>
        <end position="243"/>
    </location>
</feature>
<feature type="binding site" evidence="1">
    <location>
        <position position="112"/>
    </location>
    <ligand>
        <name>S-adenosyl-L-methionine</name>
        <dbReference type="ChEBI" id="CHEBI:59789"/>
    </ligand>
</feature>
<feature type="binding site" evidence="1">
    <location>
        <begin position="131"/>
        <end position="136"/>
    </location>
    <ligand>
        <name>S-adenosyl-L-methionine</name>
        <dbReference type="ChEBI" id="CHEBI:59789"/>
    </ligand>
</feature>
<protein>
    <recommendedName>
        <fullName evidence="1">tRNA (guanine-N(1)-)-methyltransferase</fullName>
        <ecNumber evidence="1">2.1.1.228</ecNumber>
    </recommendedName>
    <alternativeName>
        <fullName evidence="1">M1G-methyltransferase</fullName>
    </alternativeName>
    <alternativeName>
        <fullName evidence="1">tRNA [GM37] methyltransferase</fullName>
    </alternativeName>
</protein>
<sequence>MRIDVLSLFPDMFAPMRQSIIGKAIDKGALDFQVTDFRDFTENKHNNVDDYPFGGGAGMLLTPQPIFDAMASVEKQAGGKGRVILLDPAGRQFNHEVAQELATYDHLTFVAGHYEGYDERIRELVDDEISLGDYVLTGGELGAMVIIDATVRFLPEILGNAASAEGDSFEDGLLEFPQYTRPADFRGRMVPEVLTSGNHAKIAEWRLKESLRRTYLRRPDLLEKRQLTQQERDLLDNIKSEEQ</sequence>
<keyword id="KW-0963">Cytoplasm</keyword>
<keyword id="KW-0489">Methyltransferase</keyword>
<keyword id="KW-1185">Reference proteome</keyword>
<keyword id="KW-0949">S-adenosyl-L-methionine</keyword>
<keyword id="KW-0808">Transferase</keyword>
<keyword id="KW-0819">tRNA processing</keyword>
<reference key="1">
    <citation type="journal article" date="2006" name="Proc. Natl. Acad. Sci. U.S.A.">
        <title>Comparative genomics of the lactic acid bacteria.</title>
        <authorList>
            <person name="Makarova K.S."/>
            <person name="Slesarev A."/>
            <person name="Wolf Y.I."/>
            <person name="Sorokin A."/>
            <person name="Mirkin B."/>
            <person name="Koonin E.V."/>
            <person name="Pavlov A."/>
            <person name="Pavlova N."/>
            <person name="Karamychev V."/>
            <person name="Polouchine N."/>
            <person name="Shakhova V."/>
            <person name="Grigoriev I."/>
            <person name="Lou Y."/>
            <person name="Rohksar D."/>
            <person name="Lucas S."/>
            <person name="Huang K."/>
            <person name="Goodstein D.M."/>
            <person name="Hawkins T."/>
            <person name="Plengvidhya V."/>
            <person name="Welker D."/>
            <person name="Hughes J."/>
            <person name="Goh Y."/>
            <person name="Benson A."/>
            <person name="Baldwin K."/>
            <person name="Lee J.-H."/>
            <person name="Diaz-Muniz I."/>
            <person name="Dosti B."/>
            <person name="Smeianov V."/>
            <person name="Wechter W."/>
            <person name="Barabote R."/>
            <person name="Lorca G."/>
            <person name="Altermann E."/>
            <person name="Barrangou R."/>
            <person name="Ganesan B."/>
            <person name="Xie Y."/>
            <person name="Rawsthorne H."/>
            <person name="Tamir D."/>
            <person name="Parker C."/>
            <person name="Breidt F."/>
            <person name="Broadbent J.R."/>
            <person name="Hutkins R."/>
            <person name="O'Sullivan D."/>
            <person name="Steele J."/>
            <person name="Unlu G."/>
            <person name="Saier M.H. Jr."/>
            <person name="Klaenhammer T."/>
            <person name="Richardson P."/>
            <person name="Kozyavkin S."/>
            <person name="Weimer B.C."/>
            <person name="Mills D.A."/>
        </authorList>
    </citation>
    <scope>NUCLEOTIDE SEQUENCE [LARGE SCALE GENOMIC DNA]</scope>
    <source>
        <strain>ATCC 8293 / DSM 20343 / BCRC 11652 / CCM 1803 / JCM 6124 / NCDO 523 / NBRC 100496 / NCIMB 8023 / NCTC 12954 / NRRL B-1118 / 37Y</strain>
    </source>
</reference>
<organism>
    <name type="scientific">Leuconostoc mesenteroides subsp. mesenteroides (strain ATCC 8293 / DSM 20343 / BCRC 11652 / CCM 1803 / JCM 6124 / NCDO 523 / NBRC 100496 / NCIMB 8023 / NCTC 12954 / NRRL B-1118 / 37Y)</name>
    <dbReference type="NCBI Taxonomy" id="203120"/>
    <lineage>
        <taxon>Bacteria</taxon>
        <taxon>Bacillati</taxon>
        <taxon>Bacillota</taxon>
        <taxon>Bacilli</taxon>
        <taxon>Lactobacillales</taxon>
        <taxon>Lactobacillaceae</taxon>
        <taxon>Leuconostoc</taxon>
    </lineage>
</organism>
<proteinExistence type="inferred from homology"/>
<comment type="function">
    <text evidence="1">Specifically methylates guanosine-37 in various tRNAs.</text>
</comment>
<comment type="catalytic activity">
    <reaction evidence="1">
        <text>guanosine(37) in tRNA + S-adenosyl-L-methionine = N(1)-methylguanosine(37) in tRNA + S-adenosyl-L-homocysteine + H(+)</text>
        <dbReference type="Rhea" id="RHEA:36899"/>
        <dbReference type="Rhea" id="RHEA-COMP:10145"/>
        <dbReference type="Rhea" id="RHEA-COMP:10147"/>
        <dbReference type="ChEBI" id="CHEBI:15378"/>
        <dbReference type="ChEBI" id="CHEBI:57856"/>
        <dbReference type="ChEBI" id="CHEBI:59789"/>
        <dbReference type="ChEBI" id="CHEBI:73542"/>
        <dbReference type="ChEBI" id="CHEBI:74269"/>
        <dbReference type="EC" id="2.1.1.228"/>
    </reaction>
</comment>
<comment type="subunit">
    <text evidence="1">Homodimer.</text>
</comment>
<comment type="subcellular location">
    <subcellularLocation>
        <location evidence="1">Cytoplasm</location>
    </subcellularLocation>
</comment>
<comment type="similarity">
    <text evidence="1">Belongs to the RNA methyltransferase TrmD family.</text>
</comment>
<evidence type="ECO:0000255" key="1">
    <source>
        <dbReference type="HAMAP-Rule" id="MF_00605"/>
    </source>
</evidence>
<name>TRMD_LEUMM</name>